<protein>
    <recommendedName>
        <fullName evidence="1">Small ribosomal subunit protein uS19</fullName>
    </recommendedName>
    <alternativeName>
        <fullName evidence="2">30S ribosomal protein S19</fullName>
    </alternativeName>
</protein>
<dbReference type="EMBL" id="CP000680">
    <property type="protein sequence ID" value="ABP86652.1"/>
    <property type="molecule type" value="Genomic_DNA"/>
</dbReference>
<dbReference type="SMR" id="A4XZ86"/>
<dbReference type="STRING" id="399739.Pmen_3905"/>
<dbReference type="KEGG" id="pmy:Pmen_3905"/>
<dbReference type="eggNOG" id="COG0185">
    <property type="taxonomic scope" value="Bacteria"/>
</dbReference>
<dbReference type="HOGENOM" id="CLU_144911_0_1_6"/>
<dbReference type="OrthoDB" id="9797833at2"/>
<dbReference type="GO" id="GO:0005737">
    <property type="term" value="C:cytoplasm"/>
    <property type="evidence" value="ECO:0007669"/>
    <property type="project" value="UniProtKB-ARBA"/>
</dbReference>
<dbReference type="GO" id="GO:0015935">
    <property type="term" value="C:small ribosomal subunit"/>
    <property type="evidence" value="ECO:0007669"/>
    <property type="project" value="InterPro"/>
</dbReference>
<dbReference type="GO" id="GO:0019843">
    <property type="term" value="F:rRNA binding"/>
    <property type="evidence" value="ECO:0007669"/>
    <property type="project" value="UniProtKB-UniRule"/>
</dbReference>
<dbReference type="GO" id="GO:0003735">
    <property type="term" value="F:structural constituent of ribosome"/>
    <property type="evidence" value="ECO:0007669"/>
    <property type="project" value="InterPro"/>
</dbReference>
<dbReference type="GO" id="GO:0000028">
    <property type="term" value="P:ribosomal small subunit assembly"/>
    <property type="evidence" value="ECO:0007669"/>
    <property type="project" value="TreeGrafter"/>
</dbReference>
<dbReference type="GO" id="GO:0006412">
    <property type="term" value="P:translation"/>
    <property type="evidence" value="ECO:0007669"/>
    <property type="project" value="UniProtKB-UniRule"/>
</dbReference>
<dbReference type="FunFam" id="3.30.860.10:FF:000001">
    <property type="entry name" value="30S ribosomal protein S19"/>
    <property type="match status" value="1"/>
</dbReference>
<dbReference type="Gene3D" id="3.30.860.10">
    <property type="entry name" value="30s Ribosomal Protein S19, Chain A"/>
    <property type="match status" value="1"/>
</dbReference>
<dbReference type="HAMAP" id="MF_00531">
    <property type="entry name" value="Ribosomal_uS19"/>
    <property type="match status" value="1"/>
</dbReference>
<dbReference type="InterPro" id="IPR002222">
    <property type="entry name" value="Ribosomal_uS19"/>
</dbReference>
<dbReference type="InterPro" id="IPR005732">
    <property type="entry name" value="Ribosomal_uS19_bac-type"/>
</dbReference>
<dbReference type="InterPro" id="IPR020934">
    <property type="entry name" value="Ribosomal_uS19_CS"/>
</dbReference>
<dbReference type="InterPro" id="IPR023575">
    <property type="entry name" value="Ribosomal_uS19_SF"/>
</dbReference>
<dbReference type="NCBIfam" id="TIGR01050">
    <property type="entry name" value="rpsS_bact"/>
    <property type="match status" value="1"/>
</dbReference>
<dbReference type="PANTHER" id="PTHR11880">
    <property type="entry name" value="RIBOSOMAL PROTEIN S19P FAMILY MEMBER"/>
    <property type="match status" value="1"/>
</dbReference>
<dbReference type="PANTHER" id="PTHR11880:SF8">
    <property type="entry name" value="SMALL RIBOSOMAL SUBUNIT PROTEIN US19M"/>
    <property type="match status" value="1"/>
</dbReference>
<dbReference type="Pfam" id="PF00203">
    <property type="entry name" value="Ribosomal_S19"/>
    <property type="match status" value="1"/>
</dbReference>
<dbReference type="PIRSF" id="PIRSF002144">
    <property type="entry name" value="Ribosomal_S19"/>
    <property type="match status" value="1"/>
</dbReference>
<dbReference type="PRINTS" id="PR00975">
    <property type="entry name" value="RIBOSOMALS19"/>
</dbReference>
<dbReference type="SUPFAM" id="SSF54570">
    <property type="entry name" value="Ribosomal protein S19"/>
    <property type="match status" value="1"/>
</dbReference>
<dbReference type="PROSITE" id="PS00323">
    <property type="entry name" value="RIBOSOMAL_S19"/>
    <property type="match status" value="1"/>
</dbReference>
<reference key="1">
    <citation type="submission" date="2007-04" db="EMBL/GenBank/DDBJ databases">
        <title>Complete sequence of Pseudomonas mendocina ymp.</title>
        <authorList>
            <consortium name="US DOE Joint Genome Institute"/>
            <person name="Copeland A."/>
            <person name="Lucas S."/>
            <person name="Lapidus A."/>
            <person name="Barry K."/>
            <person name="Glavina del Rio T."/>
            <person name="Dalin E."/>
            <person name="Tice H."/>
            <person name="Pitluck S."/>
            <person name="Kiss H."/>
            <person name="Brettin T."/>
            <person name="Detter J.C."/>
            <person name="Bruce D."/>
            <person name="Han C."/>
            <person name="Schmutz J."/>
            <person name="Larimer F."/>
            <person name="Land M."/>
            <person name="Hauser L."/>
            <person name="Kyrpides N."/>
            <person name="Mikhailova N."/>
            <person name="Hersman L."/>
            <person name="Dubois J."/>
            <person name="Maurice P."/>
            <person name="Richardson P."/>
        </authorList>
    </citation>
    <scope>NUCLEOTIDE SEQUENCE [LARGE SCALE GENOMIC DNA]</scope>
    <source>
        <strain>ymp</strain>
    </source>
</reference>
<feature type="chain" id="PRO_1000051105" description="Small ribosomal subunit protein uS19">
    <location>
        <begin position="1"/>
        <end position="91"/>
    </location>
</feature>
<name>RS19_ECTM1</name>
<evidence type="ECO:0000255" key="1">
    <source>
        <dbReference type="HAMAP-Rule" id="MF_00531"/>
    </source>
</evidence>
<evidence type="ECO:0000305" key="2"/>
<organism>
    <name type="scientific">Ectopseudomonas mendocina (strain ymp)</name>
    <name type="common">Pseudomonas mendocina</name>
    <dbReference type="NCBI Taxonomy" id="399739"/>
    <lineage>
        <taxon>Bacteria</taxon>
        <taxon>Pseudomonadati</taxon>
        <taxon>Pseudomonadota</taxon>
        <taxon>Gammaproteobacteria</taxon>
        <taxon>Pseudomonadales</taxon>
        <taxon>Pseudomonadaceae</taxon>
        <taxon>Ectopseudomonas</taxon>
    </lineage>
</organism>
<keyword id="KW-0687">Ribonucleoprotein</keyword>
<keyword id="KW-0689">Ribosomal protein</keyword>
<keyword id="KW-0694">RNA-binding</keyword>
<keyword id="KW-0699">rRNA-binding</keyword>
<accession>A4XZ86</accession>
<comment type="function">
    <text evidence="1">Protein S19 forms a complex with S13 that binds strongly to the 16S ribosomal RNA.</text>
</comment>
<comment type="similarity">
    <text evidence="1">Belongs to the universal ribosomal protein uS19 family.</text>
</comment>
<gene>
    <name evidence="1" type="primary">rpsS</name>
    <name type="ordered locus">Pmen_3905</name>
</gene>
<sequence length="91" mass="10306">MPRSLKKGPFIDLHLLKKVEAAVEKNDRKPVKTWSRRSMILPQMVGLTIAVHNGRQHVPVLVNEDMVGHKLGEFAGTRTYRGHVADKKGKR</sequence>
<proteinExistence type="inferred from homology"/>